<gene>
    <name type="primary">HBA2</name>
</gene>
<sequence length="142" mass="15220">MVLSAADKTNVKAAWSKVGGNAGEFGAEALERMFLGFPTTKTYFPHFDLSHGSAQVKAHGKKVGDALTLAVGHLDDLPGALSNLSDLHAHKLRVDPVNFKLLSHCLLSTLAVHLPNDFTPAVHASLDKFLSTVSTVLTSKYR</sequence>
<accession>Q7JFN6</accession>
<comment type="function">
    <text>Involved in oxygen transport from the lung to the various peripheral tissues.</text>
</comment>
<comment type="function">
    <molecule>Hemopressin</molecule>
    <text evidence="1">Hemopressin acts as an antagonist peptide of the cannabinoid receptor CNR1. Hemopressin-binding efficiently blocks cannabinoid receptor CNR1 and subsequent signaling.</text>
</comment>
<comment type="subunit">
    <text>Heterotetramer of two alpha chains and two beta chains.</text>
</comment>
<comment type="tissue specificity">
    <text>Red blood cells.</text>
</comment>
<comment type="similarity">
    <text evidence="2">Belongs to the globin family.</text>
</comment>
<name>HBA2_EQUGR</name>
<reference key="1">
    <citation type="journal article" date="1998" name="J. Mol. Evol.">
        <title>Phylogenetic relationships within the genus Equus and the evolution of alpha and theta globin genes.</title>
        <authorList>
            <person name="Oakenfull E.A."/>
            <person name="Clegg J.B."/>
        </authorList>
    </citation>
    <scope>NUCLEOTIDE SEQUENCE [GENOMIC DNA]</scope>
</reference>
<proteinExistence type="evidence at transcript level"/>
<keyword id="KW-0349">Heme</keyword>
<keyword id="KW-0408">Iron</keyword>
<keyword id="KW-0479">Metal-binding</keyword>
<keyword id="KW-0561">Oxygen transport</keyword>
<keyword id="KW-0813">Transport</keyword>
<dbReference type="EMBL" id="U70192">
    <property type="protein sequence ID" value="AAB93464.1"/>
    <property type="molecule type" value="Genomic_DNA"/>
</dbReference>
<dbReference type="SMR" id="Q7JFN6"/>
<dbReference type="GO" id="GO:0072562">
    <property type="term" value="C:blood microparticle"/>
    <property type="evidence" value="ECO:0007669"/>
    <property type="project" value="TreeGrafter"/>
</dbReference>
<dbReference type="GO" id="GO:0031838">
    <property type="term" value="C:haptoglobin-hemoglobin complex"/>
    <property type="evidence" value="ECO:0007669"/>
    <property type="project" value="TreeGrafter"/>
</dbReference>
<dbReference type="GO" id="GO:0005833">
    <property type="term" value="C:hemoglobin complex"/>
    <property type="evidence" value="ECO:0007669"/>
    <property type="project" value="InterPro"/>
</dbReference>
<dbReference type="GO" id="GO:0031720">
    <property type="term" value="F:haptoglobin binding"/>
    <property type="evidence" value="ECO:0007669"/>
    <property type="project" value="TreeGrafter"/>
</dbReference>
<dbReference type="GO" id="GO:0020037">
    <property type="term" value="F:heme binding"/>
    <property type="evidence" value="ECO:0007669"/>
    <property type="project" value="InterPro"/>
</dbReference>
<dbReference type="GO" id="GO:0005506">
    <property type="term" value="F:iron ion binding"/>
    <property type="evidence" value="ECO:0007669"/>
    <property type="project" value="InterPro"/>
</dbReference>
<dbReference type="GO" id="GO:0043177">
    <property type="term" value="F:organic acid binding"/>
    <property type="evidence" value="ECO:0007669"/>
    <property type="project" value="TreeGrafter"/>
</dbReference>
<dbReference type="GO" id="GO:0019825">
    <property type="term" value="F:oxygen binding"/>
    <property type="evidence" value="ECO:0007669"/>
    <property type="project" value="InterPro"/>
</dbReference>
<dbReference type="GO" id="GO:0005344">
    <property type="term" value="F:oxygen carrier activity"/>
    <property type="evidence" value="ECO:0007669"/>
    <property type="project" value="UniProtKB-KW"/>
</dbReference>
<dbReference type="GO" id="GO:0004601">
    <property type="term" value="F:peroxidase activity"/>
    <property type="evidence" value="ECO:0007669"/>
    <property type="project" value="TreeGrafter"/>
</dbReference>
<dbReference type="GO" id="GO:0042744">
    <property type="term" value="P:hydrogen peroxide catabolic process"/>
    <property type="evidence" value="ECO:0007669"/>
    <property type="project" value="TreeGrafter"/>
</dbReference>
<dbReference type="CDD" id="cd08927">
    <property type="entry name" value="Hb-alpha-like"/>
    <property type="match status" value="1"/>
</dbReference>
<dbReference type="FunFam" id="1.10.490.10:FF:000002">
    <property type="entry name" value="Hemoglobin subunit alpha"/>
    <property type="match status" value="1"/>
</dbReference>
<dbReference type="Gene3D" id="1.10.490.10">
    <property type="entry name" value="Globins"/>
    <property type="match status" value="1"/>
</dbReference>
<dbReference type="InterPro" id="IPR000971">
    <property type="entry name" value="Globin"/>
</dbReference>
<dbReference type="InterPro" id="IPR009050">
    <property type="entry name" value="Globin-like_sf"/>
</dbReference>
<dbReference type="InterPro" id="IPR012292">
    <property type="entry name" value="Globin/Proto"/>
</dbReference>
<dbReference type="InterPro" id="IPR002338">
    <property type="entry name" value="Hemoglobin_a-typ"/>
</dbReference>
<dbReference type="InterPro" id="IPR050056">
    <property type="entry name" value="Hemoglobin_oxygen_transport"/>
</dbReference>
<dbReference type="InterPro" id="IPR002339">
    <property type="entry name" value="Hemoglobin_pi"/>
</dbReference>
<dbReference type="PANTHER" id="PTHR11442">
    <property type="entry name" value="HEMOGLOBIN FAMILY MEMBER"/>
    <property type="match status" value="1"/>
</dbReference>
<dbReference type="PANTHER" id="PTHR11442:SF48">
    <property type="entry name" value="HEMOGLOBIN SUBUNIT ALPHA"/>
    <property type="match status" value="1"/>
</dbReference>
<dbReference type="Pfam" id="PF00042">
    <property type="entry name" value="Globin"/>
    <property type="match status" value="1"/>
</dbReference>
<dbReference type="PRINTS" id="PR00612">
    <property type="entry name" value="ALPHAHAEM"/>
</dbReference>
<dbReference type="PRINTS" id="PR00815">
    <property type="entry name" value="PIHAEM"/>
</dbReference>
<dbReference type="SUPFAM" id="SSF46458">
    <property type="entry name" value="Globin-like"/>
    <property type="match status" value="1"/>
</dbReference>
<dbReference type="PROSITE" id="PS01033">
    <property type="entry name" value="GLOBIN"/>
    <property type="match status" value="1"/>
</dbReference>
<protein>
    <recommendedName>
        <fullName>Hemoglobin subunit alpha-2</fullName>
    </recommendedName>
    <alternativeName>
        <fullName>Alpha-2-globin</fullName>
    </alternativeName>
    <alternativeName>
        <fullName>Hemoglobin alpha-2 chain</fullName>
    </alternativeName>
    <component>
        <recommendedName>
            <fullName evidence="1">Hemopressin</fullName>
        </recommendedName>
    </component>
</protein>
<organism>
    <name type="scientific">Equus grevyi</name>
    <name type="common">Grevy's zebra</name>
    <dbReference type="NCBI Taxonomy" id="9792"/>
    <lineage>
        <taxon>Eukaryota</taxon>
        <taxon>Metazoa</taxon>
        <taxon>Chordata</taxon>
        <taxon>Craniata</taxon>
        <taxon>Vertebrata</taxon>
        <taxon>Euteleostomi</taxon>
        <taxon>Mammalia</taxon>
        <taxon>Eutheria</taxon>
        <taxon>Laurasiatheria</taxon>
        <taxon>Perissodactyla</taxon>
        <taxon>Equidae</taxon>
        <taxon>Equus</taxon>
    </lineage>
</organism>
<feature type="chain" id="PRO_0000052628" description="Hemoglobin subunit alpha-2">
    <location>
        <begin position="1"/>
        <end position="142"/>
    </location>
</feature>
<feature type="peptide" id="PRO_0000455873" description="Hemopressin" evidence="1">
    <location>
        <begin position="96"/>
        <end position="104"/>
    </location>
</feature>
<feature type="domain" description="Globin" evidence="2">
    <location>
        <begin position="2"/>
        <end position="142"/>
    </location>
</feature>
<feature type="binding site" evidence="2">
    <location>
        <position position="59"/>
    </location>
    <ligand>
        <name>O2</name>
        <dbReference type="ChEBI" id="CHEBI:15379"/>
    </ligand>
</feature>
<feature type="binding site" description="proximal binding residue" evidence="2">
    <location>
        <position position="88"/>
    </location>
    <ligand>
        <name>heme b</name>
        <dbReference type="ChEBI" id="CHEBI:60344"/>
    </ligand>
    <ligandPart>
        <name>Fe</name>
        <dbReference type="ChEBI" id="CHEBI:18248"/>
    </ligandPart>
</feature>
<evidence type="ECO:0000250" key="1">
    <source>
        <dbReference type="UniProtKB" id="P01946"/>
    </source>
</evidence>
<evidence type="ECO:0000255" key="2">
    <source>
        <dbReference type="PROSITE-ProRule" id="PRU00238"/>
    </source>
</evidence>